<feature type="chain" id="PRO_0000389782" description="Acetyl-coenzyme A carboxylase carboxyl transferase subunit beta">
    <location>
        <begin position="1"/>
        <end position="294"/>
    </location>
</feature>
<feature type="domain" description="CoA carboxyltransferase N-terminal" evidence="2">
    <location>
        <begin position="30"/>
        <end position="294"/>
    </location>
</feature>
<feature type="zinc finger region" description="C4-type" evidence="1">
    <location>
        <begin position="34"/>
        <end position="56"/>
    </location>
</feature>
<feature type="binding site" evidence="1">
    <location>
        <position position="34"/>
    </location>
    <ligand>
        <name>Zn(2+)</name>
        <dbReference type="ChEBI" id="CHEBI:29105"/>
    </ligand>
</feature>
<feature type="binding site" evidence="1">
    <location>
        <position position="37"/>
    </location>
    <ligand>
        <name>Zn(2+)</name>
        <dbReference type="ChEBI" id="CHEBI:29105"/>
    </ligand>
</feature>
<feature type="binding site" evidence="1">
    <location>
        <position position="53"/>
    </location>
    <ligand>
        <name>Zn(2+)</name>
        <dbReference type="ChEBI" id="CHEBI:29105"/>
    </ligand>
</feature>
<feature type="binding site" evidence="1">
    <location>
        <position position="56"/>
    </location>
    <ligand>
        <name>Zn(2+)</name>
        <dbReference type="ChEBI" id="CHEBI:29105"/>
    </ligand>
</feature>
<evidence type="ECO:0000255" key="1">
    <source>
        <dbReference type="HAMAP-Rule" id="MF_01395"/>
    </source>
</evidence>
<evidence type="ECO:0000255" key="2">
    <source>
        <dbReference type="PROSITE-ProRule" id="PRU01136"/>
    </source>
</evidence>
<name>ACCD_LISMO</name>
<sequence length="294" mass="32018">MLGDLFTKPKKRKYATIPSDGTKADVPEGIMTKCPECKKIMYTKELQKNLMVCNYCGFHHPIGAKARIDMLVDEGSFEEIDASLTTANPLGFEDYMDRIEKDKQKSGLNEAIVTGHATIGGNPLVIAVMDSRFRMASMGSVVGEKILRAVEDADKTNKPFVIFTASGGARMQEGMLSLMQMAKTSAAFKRFSNHGGLIITVMTHPTTGGVSASFASLGDYNFAEPGALIGFAGRRVIEQTVREELPEDFQTAEFLLKHGQLDDCISRLDLQNKLSFILSIHVKAPGVGGEVDGE</sequence>
<accession>Q8Y6V8</accession>
<reference key="1">
    <citation type="journal article" date="2001" name="Science">
        <title>Comparative genomics of Listeria species.</title>
        <authorList>
            <person name="Glaser P."/>
            <person name="Frangeul L."/>
            <person name="Buchrieser C."/>
            <person name="Rusniok C."/>
            <person name="Amend A."/>
            <person name="Baquero F."/>
            <person name="Berche P."/>
            <person name="Bloecker H."/>
            <person name="Brandt P."/>
            <person name="Chakraborty T."/>
            <person name="Charbit A."/>
            <person name="Chetouani F."/>
            <person name="Couve E."/>
            <person name="de Daruvar A."/>
            <person name="Dehoux P."/>
            <person name="Domann E."/>
            <person name="Dominguez-Bernal G."/>
            <person name="Duchaud E."/>
            <person name="Durant L."/>
            <person name="Dussurget O."/>
            <person name="Entian K.-D."/>
            <person name="Fsihi H."/>
            <person name="Garcia-del Portillo F."/>
            <person name="Garrido P."/>
            <person name="Gautier L."/>
            <person name="Goebel W."/>
            <person name="Gomez-Lopez N."/>
            <person name="Hain T."/>
            <person name="Hauf J."/>
            <person name="Jackson D."/>
            <person name="Jones L.-M."/>
            <person name="Kaerst U."/>
            <person name="Kreft J."/>
            <person name="Kuhn M."/>
            <person name="Kunst F."/>
            <person name="Kurapkat G."/>
            <person name="Madueno E."/>
            <person name="Maitournam A."/>
            <person name="Mata Vicente J."/>
            <person name="Ng E."/>
            <person name="Nedjari H."/>
            <person name="Nordsiek G."/>
            <person name="Novella S."/>
            <person name="de Pablos B."/>
            <person name="Perez-Diaz J.-C."/>
            <person name="Purcell R."/>
            <person name="Remmel B."/>
            <person name="Rose M."/>
            <person name="Schlueter T."/>
            <person name="Simoes N."/>
            <person name="Tierrez A."/>
            <person name="Vazquez-Boland J.-A."/>
            <person name="Voss H."/>
            <person name="Wehland J."/>
            <person name="Cossart P."/>
        </authorList>
    </citation>
    <scope>NUCLEOTIDE SEQUENCE [LARGE SCALE GENOMIC DNA]</scope>
    <source>
        <strain>ATCC BAA-679 / EGD-e</strain>
    </source>
</reference>
<protein>
    <recommendedName>
        <fullName evidence="1">Acetyl-coenzyme A carboxylase carboxyl transferase subunit beta</fullName>
        <shortName evidence="1">ACCase subunit beta</shortName>
        <shortName evidence="1">Acetyl-CoA carboxylase carboxyltransferase subunit beta</shortName>
        <ecNumber evidence="1">2.1.3.15</ecNumber>
    </recommendedName>
</protein>
<proteinExistence type="inferred from homology"/>
<comment type="function">
    <text evidence="1">Component of the acetyl coenzyme A carboxylase (ACC) complex. Biotin carboxylase (BC) catalyzes the carboxylation of biotin on its carrier protein (BCCP) and then the CO(2) group is transferred by the transcarboxylase to acetyl-CoA to form malonyl-CoA.</text>
</comment>
<comment type="catalytic activity">
    <reaction evidence="1">
        <text>N(6)-carboxybiotinyl-L-lysyl-[protein] + acetyl-CoA = N(6)-biotinyl-L-lysyl-[protein] + malonyl-CoA</text>
        <dbReference type="Rhea" id="RHEA:54728"/>
        <dbReference type="Rhea" id="RHEA-COMP:10505"/>
        <dbReference type="Rhea" id="RHEA-COMP:10506"/>
        <dbReference type="ChEBI" id="CHEBI:57288"/>
        <dbReference type="ChEBI" id="CHEBI:57384"/>
        <dbReference type="ChEBI" id="CHEBI:83144"/>
        <dbReference type="ChEBI" id="CHEBI:83145"/>
        <dbReference type="EC" id="2.1.3.15"/>
    </reaction>
</comment>
<comment type="cofactor">
    <cofactor evidence="1">
        <name>Zn(2+)</name>
        <dbReference type="ChEBI" id="CHEBI:29105"/>
    </cofactor>
    <text evidence="1">Binds 1 zinc ion per subunit.</text>
</comment>
<comment type="pathway">
    <text evidence="1">Lipid metabolism; malonyl-CoA biosynthesis; malonyl-CoA from acetyl-CoA: step 1/1.</text>
</comment>
<comment type="subunit">
    <text evidence="1">Acetyl-CoA carboxylase is a heterohexamer composed of biotin carboxyl carrier protein (AccB), biotin carboxylase (AccC) and two subunits each of ACCase subunit alpha (AccA) and ACCase subunit beta (AccD).</text>
</comment>
<comment type="subcellular location">
    <subcellularLocation>
        <location evidence="1">Cytoplasm</location>
    </subcellularLocation>
</comment>
<comment type="similarity">
    <text evidence="1">Belongs to the AccD/PCCB family.</text>
</comment>
<keyword id="KW-0067">ATP-binding</keyword>
<keyword id="KW-0963">Cytoplasm</keyword>
<keyword id="KW-0275">Fatty acid biosynthesis</keyword>
<keyword id="KW-0276">Fatty acid metabolism</keyword>
<keyword id="KW-0444">Lipid biosynthesis</keyword>
<keyword id="KW-0443">Lipid metabolism</keyword>
<keyword id="KW-0479">Metal-binding</keyword>
<keyword id="KW-0547">Nucleotide-binding</keyword>
<keyword id="KW-1185">Reference proteome</keyword>
<keyword id="KW-0808">Transferase</keyword>
<keyword id="KW-0862">Zinc</keyword>
<keyword id="KW-0863">Zinc-finger</keyword>
<dbReference type="EC" id="2.1.3.15" evidence="1"/>
<dbReference type="EMBL" id="AL591979">
    <property type="protein sequence ID" value="CAC99651.1"/>
    <property type="molecule type" value="Genomic_DNA"/>
</dbReference>
<dbReference type="PIR" id="AE1271">
    <property type="entry name" value="AE1271"/>
</dbReference>
<dbReference type="RefSeq" id="NP_465098.1">
    <property type="nucleotide sequence ID" value="NC_003210.1"/>
</dbReference>
<dbReference type="RefSeq" id="WP_010989745.1">
    <property type="nucleotide sequence ID" value="NZ_CP149495.1"/>
</dbReference>
<dbReference type="SMR" id="Q8Y6V8"/>
<dbReference type="STRING" id="169963.gene:17594230"/>
<dbReference type="PaxDb" id="169963-lmo1573"/>
<dbReference type="EnsemblBacteria" id="CAC99651">
    <property type="protein sequence ID" value="CAC99651"/>
    <property type="gene ID" value="CAC99651"/>
</dbReference>
<dbReference type="GeneID" id="986998"/>
<dbReference type="KEGG" id="lmo:lmo1573"/>
<dbReference type="PATRIC" id="fig|169963.11.peg.1614"/>
<dbReference type="eggNOG" id="COG0777">
    <property type="taxonomic scope" value="Bacteria"/>
</dbReference>
<dbReference type="HOGENOM" id="CLU_015486_1_1_9"/>
<dbReference type="OrthoDB" id="9772975at2"/>
<dbReference type="PhylomeDB" id="Q8Y6V8"/>
<dbReference type="BioCyc" id="LMON169963:LMO1573-MONOMER"/>
<dbReference type="UniPathway" id="UPA00655">
    <property type="reaction ID" value="UER00711"/>
</dbReference>
<dbReference type="Proteomes" id="UP000000817">
    <property type="component" value="Chromosome"/>
</dbReference>
<dbReference type="GO" id="GO:0009317">
    <property type="term" value="C:acetyl-CoA carboxylase complex"/>
    <property type="evidence" value="ECO:0007669"/>
    <property type="project" value="InterPro"/>
</dbReference>
<dbReference type="GO" id="GO:0003989">
    <property type="term" value="F:acetyl-CoA carboxylase activity"/>
    <property type="evidence" value="ECO:0007669"/>
    <property type="project" value="InterPro"/>
</dbReference>
<dbReference type="GO" id="GO:0005524">
    <property type="term" value="F:ATP binding"/>
    <property type="evidence" value="ECO:0007669"/>
    <property type="project" value="UniProtKB-KW"/>
</dbReference>
<dbReference type="GO" id="GO:0016743">
    <property type="term" value="F:carboxyl- or carbamoyltransferase activity"/>
    <property type="evidence" value="ECO:0007669"/>
    <property type="project" value="UniProtKB-UniRule"/>
</dbReference>
<dbReference type="GO" id="GO:0008270">
    <property type="term" value="F:zinc ion binding"/>
    <property type="evidence" value="ECO:0007669"/>
    <property type="project" value="UniProtKB-UniRule"/>
</dbReference>
<dbReference type="GO" id="GO:2001295">
    <property type="term" value="P:malonyl-CoA biosynthetic process"/>
    <property type="evidence" value="ECO:0007669"/>
    <property type="project" value="UniProtKB-UniRule"/>
</dbReference>
<dbReference type="GO" id="GO:0071768">
    <property type="term" value="P:mycolic acid biosynthetic process"/>
    <property type="evidence" value="ECO:0000318"/>
    <property type="project" value="GO_Central"/>
</dbReference>
<dbReference type="Gene3D" id="3.90.226.10">
    <property type="entry name" value="2-enoyl-CoA Hydratase, Chain A, domain 1"/>
    <property type="match status" value="1"/>
</dbReference>
<dbReference type="HAMAP" id="MF_01395">
    <property type="entry name" value="AcetylCoA_CT_beta"/>
    <property type="match status" value="1"/>
</dbReference>
<dbReference type="InterPro" id="IPR034733">
    <property type="entry name" value="AcCoA_carboxyl_beta"/>
</dbReference>
<dbReference type="InterPro" id="IPR000438">
    <property type="entry name" value="Acetyl_CoA_COase_Trfase_b_su"/>
</dbReference>
<dbReference type="InterPro" id="IPR029045">
    <property type="entry name" value="ClpP/crotonase-like_dom_sf"/>
</dbReference>
<dbReference type="InterPro" id="IPR011762">
    <property type="entry name" value="COA_CT_N"/>
</dbReference>
<dbReference type="InterPro" id="IPR041010">
    <property type="entry name" value="Znf-ACC"/>
</dbReference>
<dbReference type="NCBIfam" id="TIGR00515">
    <property type="entry name" value="accD"/>
    <property type="match status" value="1"/>
</dbReference>
<dbReference type="PANTHER" id="PTHR42995">
    <property type="entry name" value="ACETYL-COENZYME A CARBOXYLASE CARBOXYL TRANSFERASE SUBUNIT BETA, CHLOROPLASTIC"/>
    <property type="match status" value="1"/>
</dbReference>
<dbReference type="PANTHER" id="PTHR42995:SF5">
    <property type="entry name" value="ACETYL-COENZYME A CARBOXYLASE CARBOXYL TRANSFERASE SUBUNIT BETA, CHLOROPLASTIC"/>
    <property type="match status" value="1"/>
</dbReference>
<dbReference type="Pfam" id="PF01039">
    <property type="entry name" value="Carboxyl_trans"/>
    <property type="match status" value="1"/>
</dbReference>
<dbReference type="Pfam" id="PF17848">
    <property type="entry name" value="Zn_ribbon_ACC"/>
    <property type="match status" value="1"/>
</dbReference>
<dbReference type="PRINTS" id="PR01070">
    <property type="entry name" value="ACCCTRFRASEB"/>
</dbReference>
<dbReference type="SUPFAM" id="SSF52096">
    <property type="entry name" value="ClpP/crotonase"/>
    <property type="match status" value="1"/>
</dbReference>
<dbReference type="PROSITE" id="PS50980">
    <property type="entry name" value="COA_CT_NTER"/>
    <property type="match status" value="1"/>
</dbReference>
<organism>
    <name type="scientific">Listeria monocytogenes serovar 1/2a (strain ATCC BAA-679 / EGD-e)</name>
    <dbReference type="NCBI Taxonomy" id="169963"/>
    <lineage>
        <taxon>Bacteria</taxon>
        <taxon>Bacillati</taxon>
        <taxon>Bacillota</taxon>
        <taxon>Bacilli</taxon>
        <taxon>Bacillales</taxon>
        <taxon>Listeriaceae</taxon>
        <taxon>Listeria</taxon>
    </lineage>
</organism>
<gene>
    <name evidence="1" type="primary">accD</name>
    <name type="ordered locus">lmo1573</name>
</gene>